<comment type="similarity">
    <text evidence="1">Belongs to the SlyX family.</text>
</comment>
<reference key="1">
    <citation type="submission" date="2006-09" db="EMBL/GenBank/DDBJ databases">
        <title>Complete sequence of Rhodopseudomonas palustris BisA53.</title>
        <authorList>
            <consortium name="US DOE Joint Genome Institute"/>
            <person name="Copeland A."/>
            <person name="Lucas S."/>
            <person name="Lapidus A."/>
            <person name="Barry K."/>
            <person name="Detter J.C."/>
            <person name="Glavina del Rio T."/>
            <person name="Hammon N."/>
            <person name="Israni S."/>
            <person name="Dalin E."/>
            <person name="Tice H."/>
            <person name="Pitluck S."/>
            <person name="Chain P."/>
            <person name="Malfatti S."/>
            <person name="Shin M."/>
            <person name="Vergez L."/>
            <person name="Schmutz J."/>
            <person name="Larimer F."/>
            <person name="Land M."/>
            <person name="Hauser L."/>
            <person name="Pelletier D.A."/>
            <person name="Kyrpides N."/>
            <person name="Kim E."/>
            <person name="Harwood C.S."/>
            <person name="Oda Y."/>
            <person name="Richardson P."/>
        </authorList>
    </citation>
    <scope>NUCLEOTIDE SEQUENCE [LARGE SCALE GENOMIC DNA]</scope>
    <source>
        <strain>BisA53</strain>
    </source>
</reference>
<dbReference type="EMBL" id="CP000463">
    <property type="protein sequence ID" value="ABJ05319.1"/>
    <property type="molecule type" value="Genomic_DNA"/>
</dbReference>
<dbReference type="SMR" id="Q07RW5"/>
<dbReference type="STRING" id="316055.RPE_1367"/>
<dbReference type="KEGG" id="rpe:RPE_1367"/>
<dbReference type="eggNOG" id="COG2900">
    <property type="taxonomic scope" value="Bacteria"/>
</dbReference>
<dbReference type="HOGENOM" id="CLU_180796_5_3_5"/>
<dbReference type="OrthoDB" id="5422806at2"/>
<dbReference type="Gene3D" id="1.20.5.300">
    <property type="match status" value="1"/>
</dbReference>
<dbReference type="HAMAP" id="MF_00715">
    <property type="entry name" value="SlyX"/>
    <property type="match status" value="1"/>
</dbReference>
<dbReference type="InterPro" id="IPR007236">
    <property type="entry name" value="SlyX"/>
</dbReference>
<dbReference type="PANTHER" id="PTHR36508">
    <property type="entry name" value="PROTEIN SLYX"/>
    <property type="match status" value="1"/>
</dbReference>
<dbReference type="PANTHER" id="PTHR36508:SF1">
    <property type="entry name" value="PROTEIN SLYX"/>
    <property type="match status" value="1"/>
</dbReference>
<dbReference type="Pfam" id="PF04102">
    <property type="entry name" value="SlyX"/>
    <property type="match status" value="1"/>
</dbReference>
<dbReference type="SUPFAM" id="SSF144266">
    <property type="entry name" value="MPN010-like"/>
    <property type="match status" value="1"/>
</dbReference>
<gene>
    <name evidence="1" type="primary">slyX</name>
    <name type="ordered locus">RPE_1367</name>
</gene>
<sequence>MPDSAQPLSERLDALEIRIAYQDETIETLNATITAQWQQIDALTRQIKAFHDRLQQAESNAPAAPANERPPHY</sequence>
<proteinExistence type="inferred from homology"/>
<name>SLYX_RHOP5</name>
<protein>
    <recommendedName>
        <fullName evidence="1">Protein SlyX homolog</fullName>
    </recommendedName>
</protein>
<accession>Q07RW5</accession>
<feature type="chain" id="PRO_1000045730" description="Protein SlyX homolog">
    <location>
        <begin position="1"/>
        <end position="73"/>
    </location>
</feature>
<feature type="region of interest" description="Disordered" evidence="2">
    <location>
        <begin position="54"/>
        <end position="73"/>
    </location>
</feature>
<feature type="compositionally biased region" description="Low complexity" evidence="2">
    <location>
        <begin position="57"/>
        <end position="67"/>
    </location>
</feature>
<organism>
    <name type="scientific">Rhodopseudomonas palustris (strain BisA53)</name>
    <dbReference type="NCBI Taxonomy" id="316055"/>
    <lineage>
        <taxon>Bacteria</taxon>
        <taxon>Pseudomonadati</taxon>
        <taxon>Pseudomonadota</taxon>
        <taxon>Alphaproteobacteria</taxon>
        <taxon>Hyphomicrobiales</taxon>
        <taxon>Nitrobacteraceae</taxon>
        <taxon>Rhodopseudomonas</taxon>
    </lineage>
</organism>
<evidence type="ECO:0000255" key="1">
    <source>
        <dbReference type="HAMAP-Rule" id="MF_00715"/>
    </source>
</evidence>
<evidence type="ECO:0000256" key="2">
    <source>
        <dbReference type="SAM" id="MobiDB-lite"/>
    </source>
</evidence>